<protein>
    <recommendedName>
        <fullName>Thiol:disulfide interchange protein DsbC</fullName>
    </recommendedName>
</protein>
<organism>
    <name type="scientific">Escherichia coli O157:H7</name>
    <dbReference type="NCBI Taxonomy" id="83334"/>
    <lineage>
        <taxon>Bacteria</taxon>
        <taxon>Pseudomonadati</taxon>
        <taxon>Pseudomonadota</taxon>
        <taxon>Gammaproteobacteria</taxon>
        <taxon>Enterobacterales</taxon>
        <taxon>Enterobacteriaceae</taxon>
        <taxon>Escherichia</taxon>
    </lineage>
</organism>
<evidence type="ECO:0000250" key="1"/>
<evidence type="ECO:0000255" key="2">
    <source>
        <dbReference type="PROSITE-ProRule" id="PRU00691"/>
    </source>
</evidence>
<evidence type="ECO:0000305" key="3"/>
<gene>
    <name type="primary">dsbC</name>
    <name type="ordered locus">Z4231</name>
    <name type="ordered locus">ECs3765</name>
</gene>
<feature type="signal peptide" evidence="1">
    <location>
        <begin position="1"/>
        <end position="20"/>
    </location>
</feature>
<feature type="chain" id="PRO_0000043368" description="Thiol:disulfide interchange protein DsbC">
    <location>
        <begin position="21"/>
        <end position="236"/>
    </location>
</feature>
<feature type="domain" description="Thioredoxin" evidence="2">
    <location>
        <begin position="36"/>
        <end position="231"/>
    </location>
</feature>
<feature type="disulfide bond" description="Redox-active" evidence="2">
    <location>
        <begin position="118"/>
        <end position="121"/>
    </location>
</feature>
<feature type="disulfide bond" evidence="1">
    <location>
        <begin position="161"/>
        <end position="183"/>
    </location>
</feature>
<accession>P0AEG7</accession>
<accession>P21892</accession>
<sequence length="236" mass="25622">MKKGFMLFTLLAAFSGFAQADDAAIQQTLAKMGIKSSDIQPAPVAGMKTVLTNSGVLYITDDGKHIIQGPMYDVSGTAPVNVTNKMLLKQLNALEKEMIVYKAPQEKHVITVFTDITCGYCHKLHEQMADYNALGITVRYLAFPRQGLDSDAEKEMKAIWCAKDKNKAFDDVMAGKSVAPASCDVDIADHYALGVQLGVSGTPAVVLSNGTLVPGYQPPKEMKEFLDEHQKMTSGK</sequence>
<dbReference type="EMBL" id="AE005174">
    <property type="protein sequence ID" value="AAG58021.1"/>
    <property type="molecule type" value="Genomic_DNA"/>
</dbReference>
<dbReference type="EMBL" id="BA000007">
    <property type="protein sequence ID" value="BAB37188.1"/>
    <property type="molecule type" value="Genomic_DNA"/>
</dbReference>
<dbReference type="PIR" id="E91099">
    <property type="entry name" value="E91099"/>
</dbReference>
<dbReference type="RefSeq" id="NP_311792.1">
    <property type="nucleotide sequence ID" value="NC_002695.1"/>
</dbReference>
<dbReference type="RefSeq" id="WP_000715214.1">
    <property type="nucleotide sequence ID" value="NZ_VOAI01000003.1"/>
</dbReference>
<dbReference type="SMR" id="P0AEG7"/>
<dbReference type="STRING" id="155864.Z4231"/>
<dbReference type="GeneID" id="75205270"/>
<dbReference type="GeneID" id="916411"/>
<dbReference type="KEGG" id="ece:Z4231"/>
<dbReference type="KEGG" id="ecs:ECs_3765"/>
<dbReference type="PATRIC" id="fig|386585.9.peg.3929"/>
<dbReference type="eggNOG" id="COG1651">
    <property type="taxonomic scope" value="Bacteria"/>
</dbReference>
<dbReference type="HOGENOM" id="CLU_083593_0_0_6"/>
<dbReference type="OMA" id="QMIVYKA"/>
<dbReference type="Proteomes" id="UP000000558">
    <property type="component" value="Chromosome"/>
</dbReference>
<dbReference type="Proteomes" id="UP000002519">
    <property type="component" value="Chromosome"/>
</dbReference>
<dbReference type="GO" id="GO:0042597">
    <property type="term" value="C:periplasmic space"/>
    <property type="evidence" value="ECO:0007669"/>
    <property type="project" value="UniProtKB-SubCell"/>
</dbReference>
<dbReference type="GO" id="GO:0015036">
    <property type="term" value="F:disulfide oxidoreductase activity"/>
    <property type="evidence" value="ECO:0007669"/>
    <property type="project" value="UniProtKB-ARBA"/>
</dbReference>
<dbReference type="CDD" id="cd03020">
    <property type="entry name" value="DsbA_DsbC_DsbG"/>
    <property type="match status" value="1"/>
</dbReference>
<dbReference type="FunFam" id="3.40.30.10:FF:000083">
    <property type="entry name" value="Thiol:disulfide interchange protein"/>
    <property type="match status" value="1"/>
</dbReference>
<dbReference type="Gene3D" id="3.10.450.70">
    <property type="entry name" value="Disulphide bond isomerase, DsbC/G, N-terminal"/>
    <property type="match status" value="1"/>
</dbReference>
<dbReference type="Gene3D" id="3.40.30.10">
    <property type="entry name" value="Glutaredoxin"/>
    <property type="match status" value="1"/>
</dbReference>
<dbReference type="InterPro" id="IPR033954">
    <property type="entry name" value="DiS-bond_Isoase_DsbC/G"/>
</dbReference>
<dbReference type="InterPro" id="IPR018950">
    <property type="entry name" value="DiS-bond_isomerase_DsbC/G_N"/>
</dbReference>
<dbReference type="InterPro" id="IPR009094">
    <property type="entry name" value="DiS-bond_isomerase_DsbC/G_N_sf"/>
</dbReference>
<dbReference type="InterPro" id="IPR051470">
    <property type="entry name" value="Thiol:disulfide_interchange"/>
</dbReference>
<dbReference type="InterPro" id="IPR012336">
    <property type="entry name" value="Thioredoxin-like_fold"/>
</dbReference>
<dbReference type="InterPro" id="IPR036249">
    <property type="entry name" value="Thioredoxin-like_sf"/>
</dbReference>
<dbReference type="InterPro" id="IPR017937">
    <property type="entry name" value="Thioredoxin_CS"/>
</dbReference>
<dbReference type="InterPro" id="IPR013766">
    <property type="entry name" value="Thioredoxin_domain"/>
</dbReference>
<dbReference type="NCBIfam" id="NF008129">
    <property type="entry name" value="PRK10877.1"/>
    <property type="match status" value="1"/>
</dbReference>
<dbReference type="PANTHER" id="PTHR35272:SF3">
    <property type="entry name" value="THIOL:DISULFIDE INTERCHANGE PROTEIN DSBC"/>
    <property type="match status" value="1"/>
</dbReference>
<dbReference type="PANTHER" id="PTHR35272">
    <property type="entry name" value="THIOL:DISULFIDE INTERCHANGE PROTEIN DSBC-RELATED"/>
    <property type="match status" value="1"/>
</dbReference>
<dbReference type="Pfam" id="PF10411">
    <property type="entry name" value="DsbC_N"/>
    <property type="match status" value="1"/>
</dbReference>
<dbReference type="Pfam" id="PF13098">
    <property type="entry name" value="Thioredoxin_2"/>
    <property type="match status" value="1"/>
</dbReference>
<dbReference type="SUPFAM" id="SSF54423">
    <property type="entry name" value="DsbC/DsbG N-terminal domain-like"/>
    <property type="match status" value="1"/>
</dbReference>
<dbReference type="SUPFAM" id="SSF52833">
    <property type="entry name" value="Thioredoxin-like"/>
    <property type="match status" value="1"/>
</dbReference>
<dbReference type="PROSITE" id="PS00194">
    <property type="entry name" value="THIOREDOXIN_1"/>
    <property type="match status" value="1"/>
</dbReference>
<dbReference type="PROSITE" id="PS51352">
    <property type="entry name" value="THIOREDOXIN_2"/>
    <property type="match status" value="1"/>
</dbReference>
<reference key="1">
    <citation type="journal article" date="2001" name="Nature">
        <title>Genome sequence of enterohaemorrhagic Escherichia coli O157:H7.</title>
        <authorList>
            <person name="Perna N.T."/>
            <person name="Plunkett G. III"/>
            <person name="Burland V."/>
            <person name="Mau B."/>
            <person name="Glasner J.D."/>
            <person name="Rose D.J."/>
            <person name="Mayhew G.F."/>
            <person name="Evans P.S."/>
            <person name="Gregor J."/>
            <person name="Kirkpatrick H.A."/>
            <person name="Posfai G."/>
            <person name="Hackett J."/>
            <person name="Klink S."/>
            <person name="Boutin A."/>
            <person name="Shao Y."/>
            <person name="Miller L."/>
            <person name="Grotbeck E.J."/>
            <person name="Davis N.W."/>
            <person name="Lim A."/>
            <person name="Dimalanta E.T."/>
            <person name="Potamousis K."/>
            <person name="Apodaca J."/>
            <person name="Anantharaman T.S."/>
            <person name="Lin J."/>
            <person name="Yen G."/>
            <person name="Schwartz D.C."/>
            <person name="Welch R.A."/>
            <person name="Blattner F.R."/>
        </authorList>
    </citation>
    <scope>NUCLEOTIDE SEQUENCE [LARGE SCALE GENOMIC DNA]</scope>
    <source>
        <strain>O157:H7 / EDL933 / ATCC 700927 / EHEC</strain>
    </source>
</reference>
<reference key="2">
    <citation type="journal article" date="2001" name="DNA Res.">
        <title>Complete genome sequence of enterohemorrhagic Escherichia coli O157:H7 and genomic comparison with a laboratory strain K-12.</title>
        <authorList>
            <person name="Hayashi T."/>
            <person name="Makino K."/>
            <person name="Ohnishi M."/>
            <person name="Kurokawa K."/>
            <person name="Ishii K."/>
            <person name="Yokoyama K."/>
            <person name="Han C.-G."/>
            <person name="Ohtsubo E."/>
            <person name="Nakayama K."/>
            <person name="Murata T."/>
            <person name="Tanaka M."/>
            <person name="Tobe T."/>
            <person name="Iida T."/>
            <person name="Takami H."/>
            <person name="Honda T."/>
            <person name="Sasakawa C."/>
            <person name="Ogasawara N."/>
            <person name="Yasunaga T."/>
            <person name="Kuhara S."/>
            <person name="Shiba T."/>
            <person name="Hattori M."/>
            <person name="Shinagawa H."/>
        </authorList>
    </citation>
    <scope>NUCLEOTIDE SEQUENCE [LARGE SCALE GENOMIC DNA]</scope>
    <source>
        <strain>O157:H7 / Sakai / RIMD 0509952 / EHEC</strain>
    </source>
</reference>
<proteinExistence type="inferred from homology"/>
<keyword id="KW-1015">Disulfide bond</keyword>
<keyword id="KW-0574">Periplasm</keyword>
<keyword id="KW-0676">Redox-active center</keyword>
<keyword id="KW-1185">Reference proteome</keyword>
<keyword id="KW-0732">Signal</keyword>
<name>DSBC_ECO57</name>
<comment type="function">
    <text evidence="1">Required for disulfide bond formation in some periplasmic proteins. Acts by transferring its disulfide bond to other proteins and is reduced in the process. DsbC is reoxidized by a yet uncharacterized protein. Also acts as a disulfide isomerase (By similarity).</text>
</comment>
<comment type="subunit">
    <text evidence="1">Homodimer.</text>
</comment>
<comment type="subcellular location">
    <subcellularLocation>
        <location evidence="1">Periplasm</location>
    </subcellularLocation>
</comment>
<comment type="similarity">
    <text evidence="3">Belongs to the thioredoxin family. DsbC subfamily.</text>
</comment>